<feature type="chain" id="PRO_0000101386" description="Uncharacterized protein RP511">
    <location>
        <begin position="1"/>
        <end position="950"/>
    </location>
</feature>
<gene>
    <name type="ordered locus">RP511</name>
</gene>
<organism>
    <name type="scientific">Rickettsia prowazekii (strain Madrid E)</name>
    <dbReference type="NCBI Taxonomy" id="272947"/>
    <lineage>
        <taxon>Bacteria</taxon>
        <taxon>Pseudomonadati</taxon>
        <taxon>Pseudomonadota</taxon>
        <taxon>Alphaproteobacteria</taxon>
        <taxon>Rickettsiales</taxon>
        <taxon>Rickettsiaceae</taxon>
        <taxon>Rickettsieae</taxon>
        <taxon>Rickettsia</taxon>
        <taxon>typhus group</taxon>
    </lineage>
</organism>
<protein>
    <recommendedName>
        <fullName>Uncharacterized protein RP511</fullName>
    </recommendedName>
</protein>
<proteinExistence type="predicted"/>
<sequence length="950" mass="108613">MAVVNTKNYQKVVEKVLSSSKANKALKSAIKDLSSSNSISLRTILLGAKFILTHPVNTYNLVKLAKSSNIYLDPEFQKSLLENSPIWEFLKKHSDDLPKIGRILAKAGFREFQDKSALDEEGLKILKECFKNEKVLKKLQDIAIEVKQERTDWNKVTSNILDMLVTDKNFQKFFNEKSKDITHYIRSGATEILPSDYMKSFDDILQKPEKKKLLKIFNTHPDVKQELVNNINNPNILKKFNKLFYKQEIMLTSFLKEVKAQSKPFLQEHFESYKIDLKILDIIPTLLNKIPDIKEIFDTLNAPNKGVMISLEKALEMVAGDDQLKSFFANNKTILPNMALGIIENTPSVQSITNEYNFDQQMLVIVGEVMSKPEIAHEIIADLNKGDYMSLTGNIISIINDPSFKLKDILVEQSKKGLFDNLINGVLEQDIKNSQIIKQQLINYGMEAGDVTKLTKIMPILLDKPESLKKVFRDFIKGNYTKMTKELISLTKDNPKIKEYLNNNRAIFASILDKTLMDIPGINNLDKQELYNILPSMLNHPDELIKVIEEVEKSHYHGAVSAIYNLAQKTNYFEGQLPNIIKAGFNSGFNYATEKVKDVFSSSRDFKDKVIDEITIRKHLDKIQNGKFNLEGAILLGNLSNIDFSGVSLKNADLTKVTSLKDCNFKNTNLVDAKLPDNLIMFTDTYNLDKAIPTLAPRLIKAQQAKLVDKAIDKVFVQIKAEEKKILFSKKEFLQQVKILLEENQTVKDYIIDKLNSFPMNMVTNLETPKINQYKHITNHVNSPFQILNPLYENIANQQDIKSNLFANILSEKISKKLFDKGDNRGEDFYLINQMLKSIVAEYSKPNNNIDNFLEHKNLEKLASNIASTLYSKSKYTLVGTITSGIYLPKEIFNEQLKDNFKNEFNKIIDVLKEAKNIVSNLESKVHIVDNQNKSHAYKLLLAKNKKIHR</sequence>
<accession>Q9ZD36</accession>
<dbReference type="EMBL" id="AJ235272">
    <property type="protein sequence ID" value="CAA14963.1"/>
    <property type="molecule type" value="Genomic_DNA"/>
</dbReference>
<dbReference type="PIR" id="A71655">
    <property type="entry name" value="A71655"/>
</dbReference>
<dbReference type="RefSeq" id="NP_220887.1">
    <property type="nucleotide sequence ID" value="NC_000963.1"/>
</dbReference>
<dbReference type="RefSeq" id="WP_004599081.1">
    <property type="nucleotide sequence ID" value="NC_000963.1"/>
</dbReference>
<dbReference type="SMR" id="Q9ZD36"/>
<dbReference type="STRING" id="272947.gene:17555591"/>
<dbReference type="EnsemblBacteria" id="CAA14963">
    <property type="protein sequence ID" value="CAA14963"/>
    <property type="gene ID" value="CAA14963"/>
</dbReference>
<dbReference type="KEGG" id="rpr:RP511"/>
<dbReference type="PATRIC" id="fig|272947.5.peg.521"/>
<dbReference type="eggNOG" id="COG1357">
    <property type="taxonomic scope" value="Bacteria"/>
</dbReference>
<dbReference type="HOGENOM" id="CLU_310114_0_0_5"/>
<dbReference type="OrthoDB" id="7160691at2"/>
<dbReference type="Proteomes" id="UP000002480">
    <property type="component" value="Chromosome"/>
</dbReference>
<dbReference type="Gene3D" id="2.160.20.80">
    <property type="entry name" value="E3 ubiquitin-protein ligase SopA"/>
    <property type="match status" value="1"/>
</dbReference>
<dbReference type="InterPro" id="IPR001646">
    <property type="entry name" value="5peptide_repeat"/>
</dbReference>
<dbReference type="Pfam" id="PF00805">
    <property type="entry name" value="Pentapeptide"/>
    <property type="match status" value="1"/>
</dbReference>
<dbReference type="SUPFAM" id="SSF141571">
    <property type="entry name" value="Pentapeptide repeat-like"/>
    <property type="match status" value="1"/>
</dbReference>
<reference key="1">
    <citation type="journal article" date="1998" name="Nature">
        <title>The genome sequence of Rickettsia prowazekii and the origin of mitochondria.</title>
        <authorList>
            <person name="Andersson S.G.E."/>
            <person name="Zomorodipour A."/>
            <person name="Andersson J.O."/>
            <person name="Sicheritz-Ponten T."/>
            <person name="Alsmark U.C.M."/>
            <person name="Podowski R.M."/>
            <person name="Naeslund A.K."/>
            <person name="Eriksson A.-S."/>
            <person name="Winkler H.H."/>
            <person name="Kurland C.G."/>
        </authorList>
    </citation>
    <scope>NUCLEOTIDE SEQUENCE [LARGE SCALE GENOMIC DNA]</scope>
    <source>
        <strain>Madrid E</strain>
    </source>
</reference>
<name>Y511_RICPR</name>
<keyword id="KW-1185">Reference proteome</keyword>